<keyword id="KW-0963">Cytoplasm</keyword>
<keyword id="KW-0489">Methyltransferase</keyword>
<keyword id="KW-0698">rRNA processing</keyword>
<keyword id="KW-0949">S-adenosyl-L-methionine</keyword>
<keyword id="KW-0808">Transferase</keyword>
<gene>
    <name evidence="1" type="primary">rlmE</name>
    <name evidence="1" type="synonym">rrmJ</name>
    <name type="ordered locus">Memar_1464</name>
</gene>
<organism>
    <name type="scientific">Methanoculleus marisnigri (strain ATCC 35101 / DSM 1498 / JR1)</name>
    <dbReference type="NCBI Taxonomy" id="368407"/>
    <lineage>
        <taxon>Archaea</taxon>
        <taxon>Methanobacteriati</taxon>
        <taxon>Methanobacteriota</taxon>
        <taxon>Stenosarchaea group</taxon>
        <taxon>Methanomicrobia</taxon>
        <taxon>Methanomicrobiales</taxon>
        <taxon>Methanomicrobiaceae</taxon>
        <taxon>Methanoculleus</taxon>
    </lineage>
</organism>
<sequence length="203" mass="22014">MGSQWTKDSVYRKAMKAGYRARAAYKLLEIQQRNGIIRPDDNVVDLGAAPGSWLQVLRDLTDGRVIGVDLNPIAPMEGVTTIVGDFTDPLVQERIREEAGGVVSVVVSDASPKLSGQKSYDQARAIGLGEDALAFACTVLKPGGNMVIKSFQGELFGELIAETRKHFYSVRGYRTKASRKGSAETYIIAKNFKGTCDDAEGPL</sequence>
<feature type="chain" id="PRO_0000300605" description="Ribosomal RNA large subunit methyltransferase E">
    <location>
        <begin position="1"/>
        <end position="203"/>
    </location>
</feature>
<feature type="active site" description="Proton acceptor" evidence="1">
    <location>
        <position position="149"/>
    </location>
</feature>
<feature type="binding site" evidence="1">
    <location>
        <position position="51"/>
    </location>
    <ligand>
        <name>S-adenosyl-L-methionine</name>
        <dbReference type="ChEBI" id="CHEBI:59789"/>
    </ligand>
</feature>
<feature type="binding site" evidence="1">
    <location>
        <position position="53"/>
    </location>
    <ligand>
        <name>S-adenosyl-L-methionine</name>
        <dbReference type="ChEBI" id="CHEBI:59789"/>
    </ligand>
</feature>
<feature type="binding site" evidence="1">
    <location>
        <position position="69"/>
    </location>
    <ligand>
        <name>S-adenosyl-L-methionine</name>
        <dbReference type="ChEBI" id="CHEBI:59789"/>
    </ligand>
</feature>
<feature type="binding site" evidence="1">
    <location>
        <position position="85"/>
    </location>
    <ligand>
        <name>S-adenosyl-L-methionine</name>
        <dbReference type="ChEBI" id="CHEBI:59789"/>
    </ligand>
</feature>
<feature type="binding site" evidence="1">
    <location>
        <position position="109"/>
    </location>
    <ligand>
        <name>S-adenosyl-L-methionine</name>
        <dbReference type="ChEBI" id="CHEBI:59789"/>
    </ligand>
</feature>
<evidence type="ECO:0000255" key="1">
    <source>
        <dbReference type="HAMAP-Rule" id="MF_01547"/>
    </source>
</evidence>
<dbReference type="EC" id="2.1.1.166" evidence="1"/>
<dbReference type="EMBL" id="CP000562">
    <property type="protein sequence ID" value="ABN57393.1"/>
    <property type="molecule type" value="Genomic_DNA"/>
</dbReference>
<dbReference type="RefSeq" id="WP_011844304.1">
    <property type="nucleotide sequence ID" value="NC_009051.1"/>
</dbReference>
<dbReference type="SMR" id="A3CVJ3"/>
<dbReference type="STRING" id="368407.Memar_1464"/>
<dbReference type="GeneID" id="4846582"/>
<dbReference type="KEGG" id="mem:Memar_1464"/>
<dbReference type="eggNOG" id="arCOG00079">
    <property type="taxonomic scope" value="Archaea"/>
</dbReference>
<dbReference type="HOGENOM" id="CLU_009422_4_4_2"/>
<dbReference type="OrthoDB" id="26307at2157"/>
<dbReference type="Proteomes" id="UP000002146">
    <property type="component" value="Chromosome"/>
</dbReference>
<dbReference type="GO" id="GO:0005737">
    <property type="term" value="C:cytoplasm"/>
    <property type="evidence" value="ECO:0007669"/>
    <property type="project" value="UniProtKB-SubCell"/>
</dbReference>
<dbReference type="GO" id="GO:0008650">
    <property type="term" value="F:rRNA (uridine-2'-O-)-methyltransferase activity"/>
    <property type="evidence" value="ECO:0007669"/>
    <property type="project" value="UniProtKB-UniRule"/>
</dbReference>
<dbReference type="Gene3D" id="3.40.50.150">
    <property type="entry name" value="Vaccinia Virus protein VP39"/>
    <property type="match status" value="1"/>
</dbReference>
<dbReference type="HAMAP" id="MF_01547">
    <property type="entry name" value="RNA_methyltr_E"/>
    <property type="match status" value="1"/>
</dbReference>
<dbReference type="InterPro" id="IPR050082">
    <property type="entry name" value="RNA_methyltr_RlmE"/>
</dbReference>
<dbReference type="InterPro" id="IPR002877">
    <property type="entry name" value="RNA_MeTrfase_FtsJ_dom"/>
</dbReference>
<dbReference type="InterPro" id="IPR015507">
    <property type="entry name" value="rRNA-MeTfrase_E"/>
</dbReference>
<dbReference type="InterPro" id="IPR029063">
    <property type="entry name" value="SAM-dependent_MTases_sf"/>
</dbReference>
<dbReference type="PANTHER" id="PTHR10920:SF13">
    <property type="entry name" value="PRE-RRNA 2'-O-RIBOSE RNA METHYLTRANSFERASE FTSJ3"/>
    <property type="match status" value="1"/>
</dbReference>
<dbReference type="PANTHER" id="PTHR10920">
    <property type="entry name" value="RIBOSOMAL RNA METHYLTRANSFERASE"/>
    <property type="match status" value="1"/>
</dbReference>
<dbReference type="Pfam" id="PF01728">
    <property type="entry name" value="FtsJ"/>
    <property type="match status" value="1"/>
</dbReference>
<dbReference type="PIRSF" id="PIRSF005461">
    <property type="entry name" value="23S_rRNA_mtase"/>
    <property type="match status" value="1"/>
</dbReference>
<dbReference type="SUPFAM" id="SSF53335">
    <property type="entry name" value="S-adenosyl-L-methionine-dependent methyltransferases"/>
    <property type="match status" value="1"/>
</dbReference>
<comment type="function">
    <text evidence="1">Specifically methylates the uridine in position 2552 of 23S rRNA at the 2'-O position of the ribose in the fully assembled 50S ribosomal subunit.</text>
</comment>
<comment type="catalytic activity">
    <reaction evidence="1">
        <text>uridine(2552) in 23S rRNA + S-adenosyl-L-methionine = 2'-O-methyluridine(2552) in 23S rRNA + S-adenosyl-L-homocysteine + H(+)</text>
        <dbReference type="Rhea" id="RHEA:42720"/>
        <dbReference type="Rhea" id="RHEA-COMP:10202"/>
        <dbReference type="Rhea" id="RHEA-COMP:10203"/>
        <dbReference type="ChEBI" id="CHEBI:15378"/>
        <dbReference type="ChEBI" id="CHEBI:57856"/>
        <dbReference type="ChEBI" id="CHEBI:59789"/>
        <dbReference type="ChEBI" id="CHEBI:65315"/>
        <dbReference type="ChEBI" id="CHEBI:74478"/>
        <dbReference type="EC" id="2.1.1.166"/>
    </reaction>
</comment>
<comment type="subcellular location">
    <subcellularLocation>
        <location evidence="1">Cytoplasm</location>
    </subcellularLocation>
</comment>
<comment type="similarity">
    <text evidence="1">Belongs to the class I-like SAM-binding methyltransferase superfamily. RNA methyltransferase RlmE family.</text>
</comment>
<accession>A3CVJ3</accession>
<protein>
    <recommendedName>
        <fullName evidence="1">Ribosomal RNA large subunit methyltransferase E</fullName>
        <ecNumber evidence="1">2.1.1.166</ecNumber>
    </recommendedName>
    <alternativeName>
        <fullName evidence="1">23S rRNA Um2552 methyltransferase</fullName>
    </alternativeName>
    <alternativeName>
        <fullName evidence="1">rRNA (uridine-2'-O-)-methyltransferase</fullName>
    </alternativeName>
</protein>
<reference key="1">
    <citation type="journal article" date="2009" name="Stand. Genomic Sci.">
        <title>Complete genome sequence of Methanoculleus marisnigri Romesser et al. 1981 type strain JR1.</title>
        <authorList>
            <person name="Anderson I.J."/>
            <person name="Sieprawska-Lupa M."/>
            <person name="Lapidus A."/>
            <person name="Nolan M."/>
            <person name="Copeland A."/>
            <person name="Glavina Del Rio T."/>
            <person name="Tice H."/>
            <person name="Dalin E."/>
            <person name="Barry K."/>
            <person name="Saunders E."/>
            <person name="Han C."/>
            <person name="Brettin T."/>
            <person name="Detter J.C."/>
            <person name="Bruce D."/>
            <person name="Mikhailova N."/>
            <person name="Pitluck S."/>
            <person name="Hauser L."/>
            <person name="Land M."/>
            <person name="Lucas S."/>
            <person name="Richardson P."/>
            <person name="Whitman W.B."/>
            <person name="Kyrpides N.C."/>
        </authorList>
    </citation>
    <scope>NUCLEOTIDE SEQUENCE [LARGE SCALE GENOMIC DNA]</scope>
    <source>
        <strain>ATCC 35101 / DSM 1498 / JR1</strain>
    </source>
</reference>
<name>RLME_METMJ</name>
<proteinExistence type="inferred from homology"/>